<dbReference type="EMBL" id="CP000407">
    <property type="protein sequence ID" value="ABP90288.1"/>
    <property type="molecule type" value="Genomic_DNA"/>
</dbReference>
<dbReference type="SMR" id="A4VVZ9"/>
<dbReference type="STRING" id="391295.SSU05_1322"/>
<dbReference type="KEGG" id="ssu:SSU05_1322"/>
<dbReference type="eggNOG" id="COG4479">
    <property type="taxonomic scope" value="Bacteria"/>
</dbReference>
<dbReference type="HOGENOM" id="CLU_177534_1_0_9"/>
<dbReference type="BioCyc" id="SSUI391295:GHI8-1373-MONOMER"/>
<dbReference type="Gene3D" id="1.10.150.260">
    <property type="entry name" value="YozE SAM-like"/>
    <property type="match status" value="1"/>
</dbReference>
<dbReference type="HAMAP" id="MF_01538">
    <property type="entry name" value="UPF0346"/>
    <property type="match status" value="1"/>
</dbReference>
<dbReference type="InterPro" id="IPR010673">
    <property type="entry name" value="UPF0346"/>
</dbReference>
<dbReference type="InterPro" id="IPR023089">
    <property type="entry name" value="YozE_SAM-like"/>
</dbReference>
<dbReference type="InterPro" id="IPR036806">
    <property type="entry name" value="YozE_SAM-like_sf"/>
</dbReference>
<dbReference type="NCBIfam" id="NF010193">
    <property type="entry name" value="PRK13672.1"/>
    <property type="match status" value="1"/>
</dbReference>
<dbReference type="Pfam" id="PF06855">
    <property type="entry name" value="YozE_SAM_like"/>
    <property type="match status" value="1"/>
</dbReference>
<dbReference type="PIRSF" id="PIRSF037262">
    <property type="entry name" value="UCP037262"/>
    <property type="match status" value="1"/>
</dbReference>
<dbReference type="SUPFAM" id="SSF140652">
    <property type="entry name" value="YozE-like"/>
    <property type="match status" value="1"/>
</dbReference>
<gene>
    <name type="ordered locus">SSU05_1322</name>
</gene>
<reference key="1">
    <citation type="journal article" date="2007" name="PLoS ONE">
        <title>A glimpse of streptococcal toxic shock syndrome from comparative genomics of S. suis 2 Chinese isolates.</title>
        <authorList>
            <person name="Chen C."/>
            <person name="Tang J."/>
            <person name="Dong W."/>
            <person name="Wang C."/>
            <person name="Feng Y."/>
            <person name="Wang J."/>
            <person name="Zheng F."/>
            <person name="Pan X."/>
            <person name="Liu D."/>
            <person name="Li M."/>
            <person name="Song Y."/>
            <person name="Zhu X."/>
            <person name="Sun H."/>
            <person name="Feng T."/>
            <person name="Guo Z."/>
            <person name="Ju A."/>
            <person name="Ge J."/>
            <person name="Dong Y."/>
            <person name="Sun W."/>
            <person name="Jiang Y."/>
            <person name="Wang J."/>
            <person name="Yan J."/>
            <person name="Yang H."/>
            <person name="Wang X."/>
            <person name="Gao G.F."/>
            <person name="Yang R."/>
            <person name="Wang J."/>
            <person name="Yu J."/>
        </authorList>
    </citation>
    <scope>NUCLEOTIDE SEQUENCE [LARGE SCALE GENOMIC DNA]</scope>
    <source>
        <strain>05ZYH33</strain>
    </source>
</reference>
<evidence type="ECO:0000255" key="1">
    <source>
        <dbReference type="HAMAP-Rule" id="MF_01538"/>
    </source>
</evidence>
<proteinExistence type="inferred from homology"/>
<comment type="similarity">
    <text evidence="1">Belongs to the UPF0346 family.</text>
</comment>
<protein>
    <recommendedName>
        <fullName evidence="1">UPF0346 protein SSU05_1322</fullName>
    </recommendedName>
</protein>
<accession>A4VVZ9</accession>
<feature type="chain" id="PRO_0000298760" description="UPF0346 protein SSU05_1322">
    <location>
        <begin position="1"/>
        <end position="71"/>
    </location>
</feature>
<sequence length="71" mass="8387">MRRSFYSWLMTQRNPKSNEPVAILADYAFDESDFPKQSDNFDEVSRFLEESASFAFSMSDFDAIWEDYLGH</sequence>
<organism>
    <name type="scientific">Streptococcus suis (strain 05ZYH33)</name>
    <dbReference type="NCBI Taxonomy" id="391295"/>
    <lineage>
        <taxon>Bacteria</taxon>
        <taxon>Bacillati</taxon>
        <taxon>Bacillota</taxon>
        <taxon>Bacilli</taxon>
        <taxon>Lactobacillales</taxon>
        <taxon>Streptococcaceae</taxon>
        <taxon>Streptococcus</taxon>
    </lineage>
</organism>
<name>Y1322_STRSY</name>